<evidence type="ECO:0000255" key="1">
    <source>
        <dbReference type="HAMAP-Rule" id="MF_01227"/>
    </source>
</evidence>
<organism>
    <name type="scientific">Coprothermobacter proteolyticus (strain ATCC 35245 / DSM 5265 / OCM 4 / BT)</name>
    <dbReference type="NCBI Taxonomy" id="309798"/>
    <lineage>
        <taxon>Bacteria</taxon>
        <taxon>Pseudomonadati</taxon>
        <taxon>Coprothermobacterota</taxon>
        <taxon>Coprothermobacteria</taxon>
        <taxon>Coprothermobacterales</taxon>
        <taxon>Coprothermobacteraceae</taxon>
        <taxon>Coprothermobacter</taxon>
    </lineage>
</organism>
<name>PYRG_COPPD</name>
<accession>B5Y8A3</accession>
<protein>
    <recommendedName>
        <fullName evidence="1">CTP synthase</fullName>
        <ecNumber evidence="1">6.3.4.2</ecNumber>
    </recommendedName>
    <alternativeName>
        <fullName evidence="1">Cytidine 5'-triphosphate synthase</fullName>
    </alternativeName>
    <alternativeName>
        <fullName evidence="1">Cytidine triphosphate synthetase</fullName>
        <shortName evidence="1">CTP synthetase</shortName>
        <shortName evidence="1">CTPS</shortName>
    </alternativeName>
    <alternativeName>
        <fullName evidence="1">UTP--ammonia ligase</fullName>
    </alternativeName>
</protein>
<feature type="chain" id="PRO_1000164937" description="CTP synthase">
    <location>
        <begin position="1"/>
        <end position="537"/>
    </location>
</feature>
<feature type="domain" description="Glutamine amidotransferase type-1" evidence="1">
    <location>
        <begin position="297"/>
        <end position="535"/>
    </location>
</feature>
<feature type="region of interest" description="Amidoligase domain" evidence="1">
    <location>
        <begin position="1"/>
        <end position="267"/>
    </location>
</feature>
<feature type="active site" description="Nucleophile; for glutamine hydrolysis" evidence="1">
    <location>
        <position position="382"/>
    </location>
</feature>
<feature type="active site" evidence="1">
    <location>
        <position position="508"/>
    </location>
</feature>
<feature type="active site" evidence="1">
    <location>
        <position position="510"/>
    </location>
</feature>
<feature type="binding site" evidence="1">
    <location>
        <position position="15"/>
    </location>
    <ligand>
        <name>CTP</name>
        <dbReference type="ChEBI" id="CHEBI:37563"/>
        <note>allosteric inhibitor</note>
    </ligand>
</feature>
<feature type="binding site" evidence="1">
    <location>
        <position position="15"/>
    </location>
    <ligand>
        <name>UTP</name>
        <dbReference type="ChEBI" id="CHEBI:46398"/>
    </ligand>
</feature>
<feature type="binding site" evidence="1">
    <location>
        <begin position="16"/>
        <end position="21"/>
    </location>
    <ligand>
        <name>ATP</name>
        <dbReference type="ChEBI" id="CHEBI:30616"/>
    </ligand>
</feature>
<feature type="binding site" evidence="1">
    <location>
        <position position="56"/>
    </location>
    <ligand>
        <name>L-glutamine</name>
        <dbReference type="ChEBI" id="CHEBI:58359"/>
    </ligand>
</feature>
<feature type="binding site" evidence="1">
    <location>
        <position position="73"/>
    </location>
    <ligand>
        <name>ATP</name>
        <dbReference type="ChEBI" id="CHEBI:30616"/>
    </ligand>
</feature>
<feature type="binding site" evidence="1">
    <location>
        <position position="73"/>
    </location>
    <ligand>
        <name>Mg(2+)</name>
        <dbReference type="ChEBI" id="CHEBI:18420"/>
    </ligand>
</feature>
<feature type="binding site" evidence="1">
    <location>
        <position position="141"/>
    </location>
    <ligand>
        <name>Mg(2+)</name>
        <dbReference type="ChEBI" id="CHEBI:18420"/>
    </ligand>
</feature>
<feature type="binding site" evidence="1">
    <location>
        <begin position="148"/>
        <end position="150"/>
    </location>
    <ligand>
        <name>CTP</name>
        <dbReference type="ChEBI" id="CHEBI:37563"/>
        <note>allosteric inhibitor</note>
    </ligand>
</feature>
<feature type="binding site" evidence="1">
    <location>
        <begin position="188"/>
        <end position="193"/>
    </location>
    <ligand>
        <name>CTP</name>
        <dbReference type="ChEBI" id="CHEBI:37563"/>
        <note>allosteric inhibitor</note>
    </ligand>
</feature>
<feature type="binding site" evidence="1">
    <location>
        <begin position="188"/>
        <end position="193"/>
    </location>
    <ligand>
        <name>UTP</name>
        <dbReference type="ChEBI" id="CHEBI:46398"/>
    </ligand>
</feature>
<feature type="binding site" evidence="1">
    <location>
        <position position="224"/>
    </location>
    <ligand>
        <name>CTP</name>
        <dbReference type="ChEBI" id="CHEBI:37563"/>
        <note>allosteric inhibitor</note>
    </ligand>
</feature>
<feature type="binding site" evidence="1">
    <location>
        <position position="224"/>
    </location>
    <ligand>
        <name>UTP</name>
        <dbReference type="ChEBI" id="CHEBI:46398"/>
    </ligand>
</feature>
<feature type="binding site" evidence="1">
    <location>
        <position position="355"/>
    </location>
    <ligand>
        <name>L-glutamine</name>
        <dbReference type="ChEBI" id="CHEBI:58359"/>
    </ligand>
</feature>
<feature type="binding site" evidence="1">
    <location>
        <begin position="383"/>
        <end position="386"/>
    </location>
    <ligand>
        <name>L-glutamine</name>
        <dbReference type="ChEBI" id="CHEBI:58359"/>
    </ligand>
</feature>
<feature type="binding site" evidence="1">
    <location>
        <position position="406"/>
    </location>
    <ligand>
        <name>L-glutamine</name>
        <dbReference type="ChEBI" id="CHEBI:58359"/>
    </ligand>
</feature>
<feature type="binding site" evidence="1">
    <location>
        <position position="463"/>
    </location>
    <ligand>
        <name>L-glutamine</name>
        <dbReference type="ChEBI" id="CHEBI:58359"/>
    </ligand>
</feature>
<comment type="function">
    <text evidence="1">Catalyzes the ATP-dependent amination of UTP to CTP with either L-glutamine or ammonia as the source of nitrogen. Regulates intracellular CTP levels through interactions with the four ribonucleotide triphosphates.</text>
</comment>
<comment type="catalytic activity">
    <reaction evidence="1">
        <text>UTP + L-glutamine + ATP + H2O = CTP + L-glutamate + ADP + phosphate + 2 H(+)</text>
        <dbReference type="Rhea" id="RHEA:26426"/>
        <dbReference type="ChEBI" id="CHEBI:15377"/>
        <dbReference type="ChEBI" id="CHEBI:15378"/>
        <dbReference type="ChEBI" id="CHEBI:29985"/>
        <dbReference type="ChEBI" id="CHEBI:30616"/>
        <dbReference type="ChEBI" id="CHEBI:37563"/>
        <dbReference type="ChEBI" id="CHEBI:43474"/>
        <dbReference type="ChEBI" id="CHEBI:46398"/>
        <dbReference type="ChEBI" id="CHEBI:58359"/>
        <dbReference type="ChEBI" id="CHEBI:456216"/>
        <dbReference type="EC" id="6.3.4.2"/>
    </reaction>
</comment>
<comment type="catalytic activity">
    <reaction evidence="1">
        <text>L-glutamine + H2O = L-glutamate + NH4(+)</text>
        <dbReference type="Rhea" id="RHEA:15889"/>
        <dbReference type="ChEBI" id="CHEBI:15377"/>
        <dbReference type="ChEBI" id="CHEBI:28938"/>
        <dbReference type="ChEBI" id="CHEBI:29985"/>
        <dbReference type="ChEBI" id="CHEBI:58359"/>
    </reaction>
</comment>
<comment type="catalytic activity">
    <reaction evidence="1">
        <text>UTP + NH4(+) + ATP = CTP + ADP + phosphate + 2 H(+)</text>
        <dbReference type="Rhea" id="RHEA:16597"/>
        <dbReference type="ChEBI" id="CHEBI:15378"/>
        <dbReference type="ChEBI" id="CHEBI:28938"/>
        <dbReference type="ChEBI" id="CHEBI:30616"/>
        <dbReference type="ChEBI" id="CHEBI:37563"/>
        <dbReference type="ChEBI" id="CHEBI:43474"/>
        <dbReference type="ChEBI" id="CHEBI:46398"/>
        <dbReference type="ChEBI" id="CHEBI:456216"/>
    </reaction>
</comment>
<comment type="activity regulation">
    <text evidence="1">Allosterically activated by GTP, when glutamine is the substrate; GTP has no effect on the reaction when ammonia is the substrate. The allosteric effector GTP functions by stabilizing the protein conformation that binds the tetrahedral intermediate(s) formed during glutamine hydrolysis. Inhibited by the product CTP, via allosteric rather than competitive inhibition.</text>
</comment>
<comment type="pathway">
    <text evidence="1">Pyrimidine metabolism; CTP biosynthesis via de novo pathway; CTP from UDP: step 2/2.</text>
</comment>
<comment type="subunit">
    <text evidence="1">Homotetramer.</text>
</comment>
<comment type="miscellaneous">
    <text evidence="1">CTPSs have evolved a hybrid strategy for distinguishing between UTP and CTP. The overlapping regions of the product feedback inhibitory and substrate sites recognize a common feature in both compounds, the triphosphate moiety. To differentiate isosteric substrate and product pyrimidine rings, an additional pocket far from the expected kinase/ligase catalytic site, specifically recognizes the cytosine and ribose portions of the product inhibitor.</text>
</comment>
<comment type="similarity">
    <text evidence="1">Belongs to the CTP synthase family.</text>
</comment>
<gene>
    <name evidence="1" type="primary">pyrG</name>
    <name type="ordered locus">COPRO5265_0650</name>
</gene>
<keyword id="KW-0067">ATP-binding</keyword>
<keyword id="KW-0315">Glutamine amidotransferase</keyword>
<keyword id="KW-0436">Ligase</keyword>
<keyword id="KW-0460">Magnesium</keyword>
<keyword id="KW-0479">Metal-binding</keyword>
<keyword id="KW-0547">Nucleotide-binding</keyword>
<keyword id="KW-0665">Pyrimidine biosynthesis</keyword>
<keyword id="KW-1185">Reference proteome</keyword>
<reference key="1">
    <citation type="submission" date="2008-08" db="EMBL/GenBank/DDBJ databases">
        <title>The complete genome sequence of Coprothermobacter proteolyticus strain ATCC 5245 / DSM 5265 / BT.</title>
        <authorList>
            <person name="Dodson R.J."/>
            <person name="Durkin A.S."/>
            <person name="Wu M."/>
            <person name="Eisen J."/>
            <person name="Sutton G."/>
        </authorList>
    </citation>
    <scope>NUCLEOTIDE SEQUENCE [LARGE SCALE GENOMIC DNA]</scope>
    <source>
        <strain>ATCC 35245 / DSM 5265 / OCM 4 / BT</strain>
    </source>
</reference>
<proteinExistence type="inferred from homology"/>
<sequence>MTNTKFVFVTGGVLSSVGKGIAAASMGMLFKARGYKVTAIKMDPYLNVDAGTMSPYQHGEVFVTEDGAETDLDLGHYERFLDENLSGKNNITSGKIYSQVITKERKGDYLGSTVQVIPHVTDAIKESILYGAQGADLAVVEIGGTVGDIESLPFLEAVRQLRRELGPNGSVVVHVTYVPILETTHEAKTKPTQHSVKELRSIGLQPDAIVLRSHTPLEKHVLEKTSLFCDVPLEGVINSYDVESVYDVPLLLEQEKLISVLEERLFGTTTEADLKKWKEMLSRQSERTLKVALVGKYVVLPDAYLSVIEAIRHAAMKLGVAAHVSLMSSDELEKCDDEQLSEKLSNMDALVVPGGFGARGIEGMVKVLRYARENKMPTLGLCLGMQVMSIEFARNVLGLKDANSTEFDPNTTYPVISLLPEQMQVRDLGGSMRLGAYPCTLVEGTRVHALYNKPVVFERHRHRFEFNNEFREAFENNGFQVSGLYEPKDLVEVLELKDHPFYVGVQYHPEFKSRPMVPHPLFLGLLSEAVAKASPVL</sequence>
<dbReference type="EC" id="6.3.4.2" evidence="1"/>
<dbReference type="EMBL" id="CP001145">
    <property type="protein sequence ID" value="ACI17896.1"/>
    <property type="molecule type" value="Genomic_DNA"/>
</dbReference>
<dbReference type="RefSeq" id="WP_012544547.1">
    <property type="nucleotide sequence ID" value="NC_011295.1"/>
</dbReference>
<dbReference type="SMR" id="B5Y8A3"/>
<dbReference type="STRING" id="309798.COPRO5265_0650"/>
<dbReference type="MEROPS" id="C26.964"/>
<dbReference type="KEGG" id="cpo:COPRO5265_0650"/>
<dbReference type="eggNOG" id="COG0504">
    <property type="taxonomic scope" value="Bacteria"/>
</dbReference>
<dbReference type="HOGENOM" id="CLU_011675_5_0_9"/>
<dbReference type="OrthoDB" id="9801107at2"/>
<dbReference type="UniPathway" id="UPA00159">
    <property type="reaction ID" value="UER00277"/>
</dbReference>
<dbReference type="Proteomes" id="UP000001732">
    <property type="component" value="Chromosome"/>
</dbReference>
<dbReference type="GO" id="GO:0005829">
    <property type="term" value="C:cytosol"/>
    <property type="evidence" value="ECO:0007669"/>
    <property type="project" value="TreeGrafter"/>
</dbReference>
<dbReference type="GO" id="GO:0005524">
    <property type="term" value="F:ATP binding"/>
    <property type="evidence" value="ECO:0007669"/>
    <property type="project" value="UniProtKB-KW"/>
</dbReference>
<dbReference type="GO" id="GO:0003883">
    <property type="term" value="F:CTP synthase activity"/>
    <property type="evidence" value="ECO:0007669"/>
    <property type="project" value="UniProtKB-UniRule"/>
</dbReference>
<dbReference type="GO" id="GO:0004359">
    <property type="term" value="F:glutaminase activity"/>
    <property type="evidence" value="ECO:0007669"/>
    <property type="project" value="RHEA"/>
</dbReference>
<dbReference type="GO" id="GO:0042802">
    <property type="term" value="F:identical protein binding"/>
    <property type="evidence" value="ECO:0007669"/>
    <property type="project" value="TreeGrafter"/>
</dbReference>
<dbReference type="GO" id="GO:0046872">
    <property type="term" value="F:metal ion binding"/>
    <property type="evidence" value="ECO:0007669"/>
    <property type="project" value="UniProtKB-KW"/>
</dbReference>
<dbReference type="GO" id="GO:0044210">
    <property type="term" value="P:'de novo' CTP biosynthetic process"/>
    <property type="evidence" value="ECO:0007669"/>
    <property type="project" value="UniProtKB-UniRule"/>
</dbReference>
<dbReference type="GO" id="GO:0019856">
    <property type="term" value="P:pyrimidine nucleobase biosynthetic process"/>
    <property type="evidence" value="ECO:0007669"/>
    <property type="project" value="TreeGrafter"/>
</dbReference>
<dbReference type="CDD" id="cd03113">
    <property type="entry name" value="CTPS_N"/>
    <property type="match status" value="1"/>
</dbReference>
<dbReference type="CDD" id="cd01746">
    <property type="entry name" value="GATase1_CTP_Synthase"/>
    <property type="match status" value="1"/>
</dbReference>
<dbReference type="FunFam" id="3.40.50.300:FF:000009">
    <property type="entry name" value="CTP synthase"/>
    <property type="match status" value="1"/>
</dbReference>
<dbReference type="FunFam" id="3.40.50.880:FF:000002">
    <property type="entry name" value="CTP synthase"/>
    <property type="match status" value="1"/>
</dbReference>
<dbReference type="Gene3D" id="3.40.50.880">
    <property type="match status" value="1"/>
</dbReference>
<dbReference type="Gene3D" id="3.40.50.300">
    <property type="entry name" value="P-loop containing nucleotide triphosphate hydrolases"/>
    <property type="match status" value="1"/>
</dbReference>
<dbReference type="HAMAP" id="MF_01227">
    <property type="entry name" value="PyrG"/>
    <property type="match status" value="1"/>
</dbReference>
<dbReference type="InterPro" id="IPR029062">
    <property type="entry name" value="Class_I_gatase-like"/>
</dbReference>
<dbReference type="InterPro" id="IPR004468">
    <property type="entry name" value="CTP_synthase"/>
</dbReference>
<dbReference type="InterPro" id="IPR017456">
    <property type="entry name" value="CTP_synthase_N"/>
</dbReference>
<dbReference type="InterPro" id="IPR017926">
    <property type="entry name" value="GATASE"/>
</dbReference>
<dbReference type="InterPro" id="IPR033828">
    <property type="entry name" value="GATase1_CTP_Synthase"/>
</dbReference>
<dbReference type="InterPro" id="IPR027417">
    <property type="entry name" value="P-loop_NTPase"/>
</dbReference>
<dbReference type="NCBIfam" id="NF003792">
    <property type="entry name" value="PRK05380.1"/>
    <property type="match status" value="1"/>
</dbReference>
<dbReference type="NCBIfam" id="TIGR00337">
    <property type="entry name" value="PyrG"/>
    <property type="match status" value="1"/>
</dbReference>
<dbReference type="PANTHER" id="PTHR11550">
    <property type="entry name" value="CTP SYNTHASE"/>
    <property type="match status" value="1"/>
</dbReference>
<dbReference type="PANTHER" id="PTHR11550:SF0">
    <property type="entry name" value="CTP SYNTHASE-RELATED"/>
    <property type="match status" value="1"/>
</dbReference>
<dbReference type="Pfam" id="PF06418">
    <property type="entry name" value="CTP_synth_N"/>
    <property type="match status" value="1"/>
</dbReference>
<dbReference type="Pfam" id="PF00117">
    <property type="entry name" value="GATase"/>
    <property type="match status" value="1"/>
</dbReference>
<dbReference type="SUPFAM" id="SSF52317">
    <property type="entry name" value="Class I glutamine amidotransferase-like"/>
    <property type="match status" value="1"/>
</dbReference>
<dbReference type="SUPFAM" id="SSF52540">
    <property type="entry name" value="P-loop containing nucleoside triphosphate hydrolases"/>
    <property type="match status" value="1"/>
</dbReference>
<dbReference type="PROSITE" id="PS51273">
    <property type="entry name" value="GATASE_TYPE_1"/>
    <property type="match status" value="1"/>
</dbReference>